<keyword id="KW-0067">ATP-binding</keyword>
<keyword id="KW-0963">Cytoplasm</keyword>
<keyword id="KW-0237">DNA synthesis</keyword>
<keyword id="KW-0418">Kinase</keyword>
<keyword id="KW-0547">Nucleotide-binding</keyword>
<keyword id="KW-0808">Transferase</keyword>
<evidence type="ECO:0000255" key="1">
    <source>
        <dbReference type="HAMAP-Rule" id="MF_00124"/>
    </source>
</evidence>
<comment type="catalytic activity">
    <reaction evidence="1">
        <text>thymidine + ATP = dTMP + ADP + H(+)</text>
        <dbReference type="Rhea" id="RHEA:19129"/>
        <dbReference type="ChEBI" id="CHEBI:15378"/>
        <dbReference type="ChEBI" id="CHEBI:17748"/>
        <dbReference type="ChEBI" id="CHEBI:30616"/>
        <dbReference type="ChEBI" id="CHEBI:63528"/>
        <dbReference type="ChEBI" id="CHEBI:456216"/>
        <dbReference type="EC" id="2.7.1.21"/>
    </reaction>
</comment>
<comment type="subunit">
    <text evidence="1">Homotetramer.</text>
</comment>
<comment type="subcellular location">
    <subcellularLocation>
        <location evidence="1">Cytoplasm</location>
    </subcellularLocation>
</comment>
<comment type="similarity">
    <text evidence="1">Belongs to the thymidine kinase family.</text>
</comment>
<name>KITH_ONYPE</name>
<accession>Q6YRB1</accession>
<dbReference type="EC" id="2.7.1.21" evidence="1"/>
<dbReference type="EMBL" id="AP006628">
    <property type="protein sequence ID" value="BAD04189.1"/>
    <property type="molecule type" value="Genomic_DNA"/>
</dbReference>
<dbReference type="SMR" id="Q6YRB1"/>
<dbReference type="STRING" id="262768.PAM_104"/>
<dbReference type="KEGG" id="poy:PAM_104"/>
<dbReference type="eggNOG" id="COG1435">
    <property type="taxonomic scope" value="Bacteria"/>
</dbReference>
<dbReference type="HOGENOM" id="CLU_064400_3_0_14"/>
<dbReference type="BioCyc" id="OYEL262768:G1G26-135-MONOMER"/>
<dbReference type="Proteomes" id="UP000002523">
    <property type="component" value="Chromosome"/>
</dbReference>
<dbReference type="GO" id="GO:0005829">
    <property type="term" value="C:cytosol"/>
    <property type="evidence" value="ECO:0007669"/>
    <property type="project" value="TreeGrafter"/>
</dbReference>
<dbReference type="GO" id="GO:0005524">
    <property type="term" value="F:ATP binding"/>
    <property type="evidence" value="ECO:0007669"/>
    <property type="project" value="UniProtKB-UniRule"/>
</dbReference>
<dbReference type="GO" id="GO:0004797">
    <property type="term" value="F:thymidine kinase activity"/>
    <property type="evidence" value="ECO:0007669"/>
    <property type="project" value="UniProtKB-UniRule"/>
</dbReference>
<dbReference type="GO" id="GO:0071897">
    <property type="term" value="P:DNA biosynthetic process"/>
    <property type="evidence" value="ECO:0007669"/>
    <property type="project" value="UniProtKB-KW"/>
</dbReference>
<dbReference type="GO" id="GO:0046104">
    <property type="term" value="P:thymidine metabolic process"/>
    <property type="evidence" value="ECO:0007669"/>
    <property type="project" value="TreeGrafter"/>
</dbReference>
<dbReference type="Gene3D" id="3.30.60.20">
    <property type="match status" value="1"/>
</dbReference>
<dbReference type="Gene3D" id="3.40.50.300">
    <property type="entry name" value="P-loop containing nucleotide triphosphate hydrolases"/>
    <property type="match status" value="1"/>
</dbReference>
<dbReference type="HAMAP" id="MF_00124">
    <property type="entry name" value="Thymidine_kinase"/>
    <property type="match status" value="1"/>
</dbReference>
<dbReference type="InterPro" id="IPR027417">
    <property type="entry name" value="P-loop_NTPase"/>
</dbReference>
<dbReference type="InterPro" id="IPR001267">
    <property type="entry name" value="Thymidine_kinase"/>
</dbReference>
<dbReference type="NCBIfam" id="NF003296">
    <property type="entry name" value="PRK04296.1-1"/>
    <property type="match status" value="1"/>
</dbReference>
<dbReference type="PANTHER" id="PTHR11441">
    <property type="entry name" value="THYMIDINE KINASE"/>
    <property type="match status" value="1"/>
</dbReference>
<dbReference type="PANTHER" id="PTHR11441:SF0">
    <property type="entry name" value="THYMIDINE KINASE, CYTOSOLIC"/>
    <property type="match status" value="1"/>
</dbReference>
<dbReference type="Pfam" id="PF00265">
    <property type="entry name" value="TK"/>
    <property type="match status" value="1"/>
</dbReference>
<dbReference type="PIRSF" id="PIRSF035805">
    <property type="entry name" value="TK_cell"/>
    <property type="match status" value="1"/>
</dbReference>
<dbReference type="SUPFAM" id="SSF57716">
    <property type="entry name" value="Glucocorticoid receptor-like (DNA-binding domain)"/>
    <property type="match status" value="1"/>
</dbReference>
<dbReference type="SUPFAM" id="SSF52540">
    <property type="entry name" value="P-loop containing nucleoside triphosphate hydrolases"/>
    <property type="match status" value="1"/>
</dbReference>
<organism>
    <name type="scientific">Onion yellows phytoplasma (strain OY-M)</name>
    <dbReference type="NCBI Taxonomy" id="262768"/>
    <lineage>
        <taxon>Bacteria</taxon>
        <taxon>Bacillati</taxon>
        <taxon>Mycoplasmatota</taxon>
        <taxon>Mollicutes</taxon>
        <taxon>Acholeplasmatales</taxon>
        <taxon>Acholeplasmataceae</taxon>
        <taxon>Candidatus Phytoplasma</taxon>
        <taxon>16SrI (Aster yellows group)</taxon>
    </lineage>
</organism>
<protein>
    <recommendedName>
        <fullName evidence="1">Thymidine kinase</fullName>
        <ecNumber evidence="1">2.7.1.21</ecNumber>
    </recommendedName>
</protein>
<reference key="1">
    <citation type="journal article" date="2004" name="Nat. Genet.">
        <title>Reductive evolution suggested from the complete genome sequence of a plant-pathogenic phytoplasma.</title>
        <authorList>
            <person name="Oshima K."/>
            <person name="Kakizawa S."/>
            <person name="Nishigawa H."/>
            <person name="Jung H.-Y."/>
            <person name="Wei W."/>
            <person name="Suzuki S."/>
            <person name="Arashida R."/>
            <person name="Nakata D."/>
            <person name="Miyata S."/>
            <person name="Ugaki M."/>
            <person name="Namba S."/>
        </authorList>
    </citation>
    <scope>NUCLEOTIDE SEQUENCE [LARGE SCALE GENOMIC DNA]</scope>
    <source>
        <strain>OY-M</strain>
    </source>
</reference>
<feature type="chain" id="PRO_0000175001" description="Thymidine kinase">
    <location>
        <begin position="1"/>
        <end position="209"/>
    </location>
</feature>
<feature type="active site" description="Proton acceptor" evidence="1">
    <location>
        <position position="91"/>
    </location>
</feature>
<feature type="binding site" evidence="1">
    <location>
        <begin position="16"/>
        <end position="23"/>
    </location>
    <ligand>
        <name>ATP</name>
        <dbReference type="ChEBI" id="CHEBI:30616"/>
    </ligand>
</feature>
<feature type="binding site" evidence="1">
    <location>
        <begin position="90"/>
        <end position="93"/>
    </location>
    <ligand>
        <name>ATP</name>
        <dbReference type="ChEBI" id="CHEBI:30616"/>
    </ligand>
</feature>
<proteinExistence type="inferred from homology"/>
<sequence length="209" mass="23351">MTQKEQGQGFIEVVCGPMFAGKTEALIQRSNQALQLNKKILSFKPQIDDRYSVKEEIVSHNQNTIPAILIDKSKDILPFITPEINVVIIDEAQFLDNDIVAIVDYLANCNIEVIISGLELDFCGKPFGPMPYLLAIADTVTKLTSICAISGKKANRTQRLIDGKPAQSNEPVVLVGGKEYHEPRCRKHHCLADIDKTKINWQNFTNQSK</sequence>
<gene>
    <name evidence="1" type="primary">tdk</name>
    <name type="ordered locus">PAM_104</name>
</gene>